<organism>
    <name type="scientific">Schizosaccharomyces pombe (strain 972 / ATCC 24843)</name>
    <name type="common">Fission yeast</name>
    <dbReference type="NCBI Taxonomy" id="284812"/>
    <lineage>
        <taxon>Eukaryota</taxon>
        <taxon>Fungi</taxon>
        <taxon>Dikarya</taxon>
        <taxon>Ascomycota</taxon>
        <taxon>Taphrinomycotina</taxon>
        <taxon>Schizosaccharomycetes</taxon>
        <taxon>Schizosaccharomycetales</taxon>
        <taxon>Schizosaccharomycetaceae</taxon>
        <taxon>Schizosaccharomyces</taxon>
    </lineage>
</organism>
<name>SA145_SCHPO</name>
<dbReference type="EMBL" id="CU329670">
    <property type="protein sequence ID" value="CAK9838999.1"/>
    <property type="molecule type" value="Genomic_DNA"/>
</dbReference>
<dbReference type="PIR" id="T38200">
    <property type="entry name" value="T38200"/>
</dbReference>
<dbReference type="RefSeq" id="NP_594733.1">
    <property type="nucleotide sequence ID" value="NM_001020161.2"/>
</dbReference>
<dbReference type="SMR" id="Q9UUI3"/>
<dbReference type="BioGRID" id="278106">
    <property type="interactions" value="33"/>
</dbReference>
<dbReference type="FunCoup" id="Q9UUI3">
    <property type="interactions" value="154"/>
</dbReference>
<dbReference type="IntAct" id="Q9UUI3">
    <property type="interactions" value="2"/>
</dbReference>
<dbReference type="STRING" id="284812.Q9UUI3"/>
<dbReference type="iPTMnet" id="Q9UUI3"/>
<dbReference type="PaxDb" id="4896-SPAC22F8.10c.1"/>
<dbReference type="EnsemblFungi" id="SPAC22F8.10c.1">
    <property type="protein sequence ID" value="SPAC22F8.10c.1:pep"/>
    <property type="gene ID" value="SPAC22F8.10c"/>
</dbReference>
<dbReference type="GeneID" id="2541609"/>
<dbReference type="KEGG" id="spo:2541609"/>
<dbReference type="PomBase" id="SPAC22F8.10c">
    <property type="gene designation" value="sap145"/>
</dbReference>
<dbReference type="VEuPathDB" id="FungiDB:SPAC22F8.10c"/>
<dbReference type="eggNOG" id="KOG2330">
    <property type="taxonomic scope" value="Eukaryota"/>
</dbReference>
<dbReference type="HOGENOM" id="CLU_014435_1_1_1"/>
<dbReference type="InParanoid" id="Q9UUI3"/>
<dbReference type="OMA" id="MASTHTY"/>
<dbReference type="PhylomeDB" id="Q9UUI3"/>
<dbReference type="PRO" id="PR:Q9UUI3"/>
<dbReference type="Proteomes" id="UP000002485">
    <property type="component" value="Chromosome I"/>
</dbReference>
<dbReference type="GO" id="GO:0071013">
    <property type="term" value="C:catalytic step 2 spliceosome"/>
    <property type="evidence" value="ECO:0000318"/>
    <property type="project" value="GO_Central"/>
</dbReference>
<dbReference type="GO" id="GO:0005737">
    <property type="term" value="C:cytoplasm"/>
    <property type="evidence" value="ECO:0007669"/>
    <property type="project" value="UniProtKB-SubCell"/>
</dbReference>
<dbReference type="GO" id="GO:0005634">
    <property type="term" value="C:nucleus"/>
    <property type="evidence" value="ECO:0007669"/>
    <property type="project" value="InterPro"/>
</dbReference>
<dbReference type="GO" id="GO:0071014">
    <property type="term" value="C:post-mRNA release spliceosomal complex"/>
    <property type="evidence" value="ECO:0000314"/>
    <property type="project" value="PomBase"/>
</dbReference>
<dbReference type="GO" id="GO:0071011">
    <property type="term" value="C:precatalytic spliceosome"/>
    <property type="evidence" value="ECO:0000318"/>
    <property type="project" value="GO_Central"/>
</dbReference>
<dbReference type="GO" id="GO:0005686">
    <property type="term" value="C:U2 snRNP"/>
    <property type="evidence" value="ECO:0000314"/>
    <property type="project" value="PomBase"/>
</dbReference>
<dbReference type="GO" id="GO:0071004">
    <property type="term" value="C:U2-type prespliceosome"/>
    <property type="evidence" value="ECO:0000266"/>
    <property type="project" value="PomBase"/>
</dbReference>
<dbReference type="GO" id="GO:0005684">
    <property type="term" value="C:U2-type spliceosomal complex"/>
    <property type="evidence" value="ECO:0000318"/>
    <property type="project" value="GO_Central"/>
</dbReference>
<dbReference type="GO" id="GO:0003723">
    <property type="term" value="F:RNA binding"/>
    <property type="evidence" value="ECO:0000250"/>
    <property type="project" value="PomBase"/>
</dbReference>
<dbReference type="GO" id="GO:0045292">
    <property type="term" value="P:mRNA cis splicing, via spliceosome"/>
    <property type="evidence" value="ECO:0000269"/>
    <property type="project" value="PomBase"/>
</dbReference>
<dbReference type="GO" id="GO:0000398">
    <property type="term" value="P:mRNA splicing, via spliceosome"/>
    <property type="evidence" value="ECO:0000318"/>
    <property type="project" value="GO_Central"/>
</dbReference>
<dbReference type="GO" id="GO:0000245">
    <property type="term" value="P:spliceosomal complex assembly"/>
    <property type="evidence" value="ECO:0000250"/>
    <property type="project" value="PomBase"/>
</dbReference>
<dbReference type="InterPro" id="IPR007180">
    <property type="entry name" value="DUF382"/>
</dbReference>
<dbReference type="InterPro" id="IPR006568">
    <property type="entry name" value="PSP_pro-rich"/>
</dbReference>
<dbReference type="InterPro" id="IPR052584">
    <property type="entry name" value="U2_snRNP_Complex_Component"/>
</dbReference>
<dbReference type="PANTHER" id="PTHR12785">
    <property type="entry name" value="SPLICING FACTOR 3B"/>
    <property type="match status" value="1"/>
</dbReference>
<dbReference type="PANTHER" id="PTHR12785:SF6">
    <property type="entry name" value="SPLICING FACTOR 3B SUBUNIT 2"/>
    <property type="match status" value="1"/>
</dbReference>
<dbReference type="Pfam" id="PF04037">
    <property type="entry name" value="DUF382"/>
    <property type="match status" value="1"/>
</dbReference>
<dbReference type="Pfam" id="PF04046">
    <property type="entry name" value="PSP"/>
    <property type="match status" value="1"/>
</dbReference>
<dbReference type="SMART" id="SM00581">
    <property type="entry name" value="PSP"/>
    <property type="match status" value="1"/>
</dbReference>
<keyword id="KW-0143">Chaperone</keyword>
<keyword id="KW-0175">Coiled coil</keyword>
<keyword id="KW-0963">Cytoplasm</keyword>
<keyword id="KW-0507">mRNA processing</keyword>
<keyword id="KW-0508">mRNA splicing</keyword>
<keyword id="KW-0539">Nucleus</keyword>
<keyword id="KW-0597">Phosphoprotein</keyword>
<keyword id="KW-1185">Reference proteome</keyword>
<keyword id="KW-0747">Spliceosome</keyword>
<sequence length="585" mass="67237">MAEIQTAQNPLKELEKILERNNKQKNKKSRNQVRREKKKLLREKTNSGAKLAEKNSDDKDQLTENNDNLYNDKKSNGNFYDTNKTDSVDGMVYTTIVDSVELDPNDPLIEQFKDVFNRFKADGQEKDFEDTDKGQIMYSDDEILSEGEEDALQKQQEEKLSKKKLRKLKRMTVAQLKMLSEKADVVEWWDVSSLDPLFLTHLKAYPNTVPVPRHWNQKRDYLSGQRGIERQLFELPSYIRATGIVQMRNAVHENEADMPLRQKMRERVQPKMGKLDIDYQKLHDAFFRYQTKPVLTGFGECYFEGKELEADVKEKRPGDISEELREALGIAPGAPPPWLFAMQRYGPPPSYPDLKIPGVNCPIPTGAQWGFHPGGWGKPPVDQFNRPLYGDVFGNVKPRIHAGTGSPVSTQHWGELEEFEEEESSEEEESEDVEYPTEEITERETIEEYQSASEPRSQREDLHAEPLTYFNQSNVEVDNVELRKNTQPSSDAANRDLYQVLPEKSTNISGFMGPQHQYDIPTAEDTLPQKRNAHSMLSSTNKGDVALNQSSNWQDELSELVSEQAMKVGAAKRQKTQSKRDKFRL</sequence>
<protein>
    <recommendedName>
        <fullName>Pre-mRNA-splicing factor sap145</fullName>
    </recommendedName>
    <alternativeName>
        <fullName>Spliceosome-associated protein 145</fullName>
    </alternativeName>
</protein>
<feature type="chain" id="PRO_0000343537" description="Pre-mRNA-splicing factor sap145">
    <location>
        <begin position="1"/>
        <end position="585"/>
    </location>
</feature>
<feature type="region of interest" description="Disordered" evidence="3">
    <location>
        <begin position="1"/>
        <end position="84"/>
    </location>
</feature>
<feature type="region of interest" description="Disordered" evidence="3">
    <location>
        <begin position="400"/>
        <end position="460"/>
    </location>
</feature>
<feature type="coiled-coil region" evidence="2">
    <location>
        <begin position="1"/>
        <end position="74"/>
    </location>
</feature>
<feature type="compositionally biased region" description="Basic and acidic residues" evidence="3">
    <location>
        <begin position="12"/>
        <end position="22"/>
    </location>
</feature>
<feature type="compositionally biased region" description="Basic residues" evidence="3">
    <location>
        <begin position="23"/>
        <end position="41"/>
    </location>
</feature>
<feature type="compositionally biased region" description="Basic and acidic residues" evidence="3">
    <location>
        <begin position="51"/>
        <end position="62"/>
    </location>
</feature>
<feature type="compositionally biased region" description="Acidic residues" evidence="3">
    <location>
        <begin position="416"/>
        <end position="439"/>
    </location>
</feature>
<feature type="modified residue" description="Phosphoserine" evidence="6">
    <location>
        <position position="145"/>
    </location>
</feature>
<gene>
    <name type="primary">sap145</name>
    <name evidence="10" type="ORF">SF3b145</name>
    <name evidence="11" type="ORF">SPAC22F8.10c</name>
</gene>
<comment type="function">
    <text evidence="1">Involved in pre-mRNA splicing. May be involved in endoplasmic reticulum-associated protein degradation (ERAD) and required for growth at low and high temperatures (By similarity).</text>
</comment>
<comment type="subunit">
    <text evidence="4 7 8 9">Belongs to the 40S cdc5-associated complex (or cwf complex), a spliceosome sub-complex reminiscent of a late-stage spliceosome composed of the U2, U5 and U6 snRNAs and at least brr2, cdc5, cwf2/prp3, cwf3/syf1, cwf4/syf3, cwf5/ecm2, spp42/cwf6, cwf7/spf27, cwf8, cwf9, cwf10, cwf11, cwf12, prp45/cwf13, cwf14, cwf15, cwf16, cwf17, cwf18, cwf19, cwf20, cwf21, cwf22, cwf23, cwf24, cwf25, cwf26, cyp7/cwf27, cwf28, cwf29/ist3, lea1, msl1, prp5/cwf1, prp10/sap155, prp12/sap130, prp17, prp22, sap61, sap62, sap114, sap145, slu7, smb1, smd1, smd3, smf1, smg1 and syf2 (PubMed:11884590, PubMed:24014766). Sap145 is part of the SF3b subcomplex of the Prp19-associated nineteen complex (NTC), composed of ini1, prp10, prp12/sap130, sap10/sap155, sap14, sap49 and sap145 (PubMed:21386897). Part of the U2 snRNP (PubMed:24014766, PubMed:24442611).</text>
</comment>
<comment type="subcellular location">
    <subcellularLocation>
        <location evidence="5">Nucleus</location>
    </subcellularLocation>
    <subcellularLocation>
        <location evidence="5">Cytoplasm</location>
    </subcellularLocation>
</comment>
<reference key="1">
    <citation type="journal article" date="2002" name="Nature">
        <title>The genome sequence of Schizosaccharomyces pombe.</title>
        <authorList>
            <person name="Wood V."/>
            <person name="Gwilliam R."/>
            <person name="Rajandream M.A."/>
            <person name="Lyne M.H."/>
            <person name="Lyne R."/>
            <person name="Stewart A."/>
            <person name="Sgouros J.G."/>
            <person name="Peat N."/>
            <person name="Hayles J."/>
            <person name="Baker S.G."/>
            <person name="Basham D."/>
            <person name="Bowman S."/>
            <person name="Brooks K."/>
            <person name="Brown D."/>
            <person name="Brown S."/>
            <person name="Chillingworth T."/>
            <person name="Churcher C.M."/>
            <person name="Collins M."/>
            <person name="Connor R."/>
            <person name="Cronin A."/>
            <person name="Davis P."/>
            <person name="Feltwell T."/>
            <person name="Fraser A."/>
            <person name="Gentles S."/>
            <person name="Goble A."/>
            <person name="Hamlin N."/>
            <person name="Harris D.E."/>
            <person name="Hidalgo J."/>
            <person name="Hodgson G."/>
            <person name="Holroyd S."/>
            <person name="Hornsby T."/>
            <person name="Howarth S."/>
            <person name="Huckle E.J."/>
            <person name="Hunt S."/>
            <person name="Jagels K."/>
            <person name="James K.D."/>
            <person name="Jones L."/>
            <person name="Jones M."/>
            <person name="Leather S."/>
            <person name="McDonald S."/>
            <person name="McLean J."/>
            <person name="Mooney P."/>
            <person name="Moule S."/>
            <person name="Mungall K.L."/>
            <person name="Murphy L.D."/>
            <person name="Niblett D."/>
            <person name="Odell C."/>
            <person name="Oliver K."/>
            <person name="O'Neil S."/>
            <person name="Pearson D."/>
            <person name="Quail M.A."/>
            <person name="Rabbinowitsch E."/>
            <person name="Rutherford K.M."/>
            <person name="Rutter S."/>
            <person name="Saunders D."/>
            <person name="Seeger K."/>
            <person name="Sharp S."/>
            <person name="Skelton J."/>
            <person name="Simmonds M.N."/>
            <person name="Squares R."/>
            <person name="Squares S."/>
            <person name="Stevens K."/>
            <person name="Taylor K."/>
            <person name="Taylor R.G."/>
            <person name="Tivey A."/>
            <person name="Walsh S.V."/>
            <person name="Warren T."/>
            <person name="Whitehead S."/>
            <person name="Woodward J.R."/>
            <person name="Volckaert G."/>
            <person name="Aert R."/>
            <person name="Robben J."/>
            <person name="Grymonprez B."/>
            <person name="Weltjens I."/>
            <person name="Vanstreels E."/>
            <person name="Rieger M."/>
            <person name="Schaefer M."/>
            <person name="Mueller-Auer S."/>
            <person name="Gabel C."/>
            <person name="Fuchs M."/>
            <person name="Duesterhoeft A."/>
            <person name="Fritzc C."/>
            <person name="Holzer E."/>
            <person name="Moestl D."/>
            <person name="Hilbert H."/>
            <person name="Borzym K."/>
            <person name="Langer I."/>
            <person name="Beck A."/>
            <person name="Lehrach H."/>
            <person name="Reinhardt R."/>
            <person name="Pohl T.M."/>
            <person name="Eger P."/>
            <person name="Zimmermann W."/>
            <person name="Wedler H."/>
            <person name="Wambutt R."/>
            <person name="Purnelle B."/>
            <person name="Goffeau A."/>
            <person name="Cadieu E."/>
            <person name="Dreano S."/>
            <person name="Gloux S."/>
            <person name="Lelaure V."/>
            <person name="Mottier S."/>
            <person name="Galibert F."/>
            <person name="Aves S.J."/>
            <person name="Xiang Z."/>
            <person name="Hunt C."/>
            <person name="Moore K."/>
            <person name="Hurst S.M."/>
            <person name="Lucas M."/>
            <person name="Rochet M."/>
            <person name="Gaillardin C."/>
            <person name="Tallada V.A."/>
            <person name="Garzon A."/>
            <person name="Thode G."/>
            <person name="Daga R.R."/>
            <person name="Cruzado L."/>
            <person name="Jimenez J."/>
            <person name="Sanchez M."/>
            <person name="del Rey F."/>
            <person name="Benito J."/>
            <person name="Dominguez A."/>
            <person name="Revuelta J.L."/>
            <person name="Moreno S."/>
            <person name="Armstrong J."/>
            <person name="Forsburg S.L."/>
            <person name="Cerutti L."/>
            <person name="Lowe T."/>
            <person name="McCombie W.R."/>
            <person name="Paulsen I."/>
            <person name="Potashkin J."/>
            <person name="Shpakovski G.V."/>
            <person name="Ussery D."/>
            <person name="Barrell B.G."/>
            <person name="Nurse P."/>
        </authorList>
    </citation>
    <scope>NUCLEOTIDE SEQUENCE [LARGE SCALE GENOMIC DNA]</scope>
    <source>
        <strain>972 / ATCC 24843</strain>
    </source>
</reference>
<reference key="2">
    <citation type="journal article" date="2002" name="Mol. Cell. Biol.">
        <title>Proteomics analysis reveals stable multiprotein complexes in both fission and budding yeasts containing Myb-related Cdc5p/Cef1p, novel pre-mRNA splicing factors, and snRNAs.</title>
        <authorList>
            <person name="Ohi M.D."/>
            <person name="Link A.J."/>
            <person name="Ren L."/>
            <person name="Jennings J.L."/>
            <person name="McDonald W.H."/>
            <person name="Gould K.L."/>
        </authorList>
    </citation>
    <scope>IDENTIFICATION IN THE CWF COMPLEX</scope>
    <scope>IDENTIFICATION BY MASS SPECTROMETRY</scope>
</reference>
<reference key="3">
    <citation type="journal article" date="2006" name="Nat. Biotechnol.">
        <title>ORFeome cloning and global analysis of protein localization in the fission yeast Schizosaccharomyces pombe.</title>
        <authorList>
            <person name="Matsuyama A."/>
            <person name="Arai R."/>
            <person name="Yashiroda Y."/>
            <person name="Shirai A."/>
            <person name="Kamata A."/>
            <person name="Sekido S."/>
            <person name="Kobayashi Y."/>
            <person name="Hashimoto A."/>
            <person name="Hamamoto M."/>
            <person name="Hiraoka Y."/>
            <person name="Horinouchi S."/>
            <person name="Yoshida M."/>
        </authorList>
    </citation>
    <scope>SUBCELLULAR LOCATION [LARGE SCALE ANALYSIS]</scope>
</reference>
<reference key="4">
    <citation type="journal article" date="2008" name="J. Proteome Res.">
        <title>Phosphoproteome analysis of fission yeast.</title>
        <authorList>
            <person name="Wilson-Grady J.T."/>
            <person name="Villen J."/>
            <person name="Gygi S.P."/>
        </authorList>
    </citation>
    <scope>PHOSPHORYLATION [LARGE SCALE ANALYSIS] AT SER-145</scope>
    <scope>IDENTIFICATION BY MASS SPECTROMETRY</scope>
</reference>
<reference key="5">
    <citation type="journal article" date="2011" name="PLoS ONE">
        <title>Systematic two-hybrid and comparative proteomic analyses reveal novel yeast pre-mRNA splicing factors connected to Prp19.</title>
        <authorList>
            <person name="Ren L."/>
            <person name="McLean J.R."/>
            <person name="Hazbun T.R."/>
            <person name="Fields S."/>
            <person name="Vander Kooi C."/>
            <person name="Ohi M.D."/>
            <person name="Gould K.L."/>
        </authorList>
    </citation>
    <scope>IDENTIFICATION IN THE NTC COMPLEX</scope>
    <scope>IDENTIFICATION BY MASS SPECTROMETRY</scope>
</reference>
<reference key="6">
    <citation type="journal article" date="2013" name="Eukaryot. Cell">
        <title>Structural and functional characterization of the N terminus of Schizosaccharomyces pombe Cwf10.</title>
        <authorList>
            <person name="Livesay S.B."/>
            <person name="Collier S.E."/>
            <person name="Bitton D.A."/>
            <person name="Baehler J."/>
            <person name="Ohi M.D."/>
        </authorList>
    </citation>
    <scope>IDENTIFICATION IN THE U2 SNRNP COMPLEX</scope>
    <scope>IDENTIFICATION BY MASS SPECTROMETRY</scope>
</reference>
<reference key="7">
    <citation type="journal article" date="2014" name="RNA">
        <title>Endogenous U2.U5.U6 snRNA complexes in S. pombe are intron lariat spliceosomes.</title>
        <authorList>
            <person name="Chen W."/>
            <person name="Shulha H.P."/>
            <person name="Ashar-Patel A."/>
            <person name="Yan J."/>
            <person name="Green K.M."/>
            <person name="Query C.C."/>
            <person name="Rhind N."/>
            <person name="Weng Z."/>
            <person name="Moore M.J."/>
        </authorList>
    </citation>
    <scope>IDENTIFICATION IN THE U2 SNRNP COMPLEX</scope>
    <scope>IDENTIFICATION BY MASS SPECTROMETRY</scope>
</reference>
<evidence type="ECO:0000250" key="1"/>
<evidence type="ECO:0000255" key="2"/>
<evidence type="ECO:0000256" key="3">
    <source>
        <dbReference type="SAM" id="MobiDB-lite"/>
    </source>
</evidence>
<evidence type="ECO:0000269" key="4">
    <source>
    </source>
</evidence>
<evidence type="ECO:0000269" key="5">
    <source>
    </source>
</evidence>
<evidence type="ECO:0000269" key="6">
    <source>
    </source>
</evidence>
<evidence type="ECO:0000269" key="7">
    <source>
    </source>
</evidence>
<evidence type="ECO:0000269" key="8">
    <source>
    </source>
</evidence>
<evidence type="ECO:0000269" key="9">
    <source>
    </source>
</evidence>
<evidence type="ECO:0000303" key="10">
    <source>
    </source>
</evidence>
<evidence type="ECO:0000312" key="11">
    <source>
        <dbReference type="PomBase" id="SPAC22F8.10c"/>
    </source>
</evidence>
<proteinExistence type="evidence at protein level"/>
<accession>Q9UUI3</accession>
<accession>A0AAN2HEH2</accession>